<feature type="chain" id="PRO_0000450595" description="C(50) beta-cyclic carotenoids biosynthesis protein LbtBC">
    <location>
        <begin position="1"/>
        <end position="432"/>
    </location>
</feature>
<feature type="transmembrane region" description="Helical" evidence="2">
    <location>
        <begin position="4"/>
        <end position="24"/>
    </location>
</feature>
<feature type="transmembrane region" description="Helical" evidence="2">
    <location>
        <begin position="36"/>
        <end position="56"/>
    </location>
</feature>
<feature type="transmembrane region" description="Helical" evidence="2">
    <location>
        <begin position="83"/>
        <end position="103"/>
    </location>
</feature>
<feature type="transmembrane region" description="Helical" evidence="2">
    <location>
        <begin position="170"/>
        <end position="190"/>
    </location>
</feature>
<feature type="transmembrane region" description="Helical" evidence="2">
    <location>
        <begin position="252"/>
        <end position="272"/>
    </location>
</feature>
<feature type="transmembrane region" description="Helical" evidence="2">
    <location>
        <begin position="277"/>
        <end position="297"/>
    </location>
</feature>
<feature type="transmembrane region" description="Helical" evidence="2">
    <location>
        <begin position="299"/>
        <end position="319"/>
    </location>
</feature>
<feature type="transmembrane region" description="Helical" evidence="2">
    <location>
        <begin position="350"/>
        <end position="370"/>
    </location>
</feature>
<feature type="transmembrane region" description="Helical" evidence="2">
    <location>
        <begin position="374"/>
        <end position="394"/>
    </location>
</feature>
<feature type="transmembrane region" description="Helical" evidence="2">
    <location>
        <begin position="409"/>
        <end position="429"/>
    </location>
</feature>
<feature type="region of interest" description="Beta-cyclase" evidence="6">
    <location>
        <begin position="1"/>
        <end position="140"/>
    </location>
</feature>
<feature type="region of interest" description="Disordered" evidence="3">
    <location>
        <begin position="111"/>
        <end position="140"/>
    </location>
</feature>
<feature type="region of interest" description="Elongase/hydratase" evidence="6">
    <location>
        <begin position="141"/>
        <end position="432"/>
    </location>
</feature>
<organism>
    <name type="scientific">Dietzia sp. (strain CQ4)</name>
    <dbReference type="NCBI Taxonomy" id="370437"/>
    <lineage>
        <taxon>Bacteria</taxon>
        <taxon>Bacillati</taxon>
        <taxon>Actinomycetota</taxon>
        <taxon>Actinomycetes</taxon>
        <taxon>Mycobacteriales</taxon>
        <taxon>Dietziaceae</taxon>
        <taxon>Dietzia</taxon>
    </lineage>
</organism>
<gene>
    <name evidence="5" type="primary">lbtBC</name>
</gene>
<dbReference type="EC" id="5.5.1.-" evidence="7"/>
<dbReference type="EC" id="2.5.1.150" evidence="1"/>
<dbReference type="EMBL" id="DQ369754">
    <property type="protein sequence ID" value="ABD24402.1"/>
    <property type="molecule type" value="Genomic_DNA"/>
</dbReference>
<dbReference type="RefSeq" id="WP_182653870.1">
    <property type="nucleotide sequence ID" value="NZ_JAALDZ010000349.1"/>
</dbReference>
<dbReference type="SMR" id="A1XI30"/>
<dbReference type="KEGG" id="ag:ABD24402"/>
<dbReference type="BioCyc" id="MetaCyc:MONOMER-20369"/>
<dbReference type="GO" id="GO:0005886">
    <property type="term" value="C:plasma membrane"/>
    <property type="evidence" value="ECO:0007669"/>
    <property type="project" value="UniProtKB-SubCell"/>
</dbReference>
<dbReference type="GO" id="GO:0016872">
    <property type="term" value="F:intramolecular lyase activity"/>
    <property type="evidence" value="ECO:0007669"/>
    <property type="project" value="InterPro"/>
</dbReference>
<dbReference type="GO" id="GO:0045436">
    <property type="term" value="F:lycopene beta cyclase activity"/>
    <property type="evidence" value="ECO:0007669"/>
    <property type="project" value="UniProtKB-ARBA"/>
</dbReference>
<dbReference type="GO" id="GO:0016765">
    <property type="term" value="F:transferase activity, transferring alkyl or aryl (other than methyl) groups"/>
    <property type="evidence" value="ECO:0007669"/>
    <property type="project" value="InterPro"/>
</dbReference>
<dbReference type="GO" id="GO:0016117">
    <property type="term" value="P:carotenoid biosynthetic process"/>
    <property type="evidence" value="ECO:0007669"/>
    <property type="project" value="UniProtKB-KW"/>
</dbReference>
<dbReference type="CDD" id="cd13966">
    <property type="entry name" value="PT_UbiA_4"/>
    <property type="match status" value="1"/>
</dbReference>
<dbReference type="Gene3D" id="1.10.357.140">
    <property type="entry name" value="UbiA prenyltransferase"/>
    <property type="match status" value="1"/>
</dbReference>
<dbReference type="Gene3D" id="1.20.120.1780">
    <property type="entry name" value="UbiA prenyltransferase"/>
    <property type="match status" value="1"/>
</dbReference>
<dbReference type="InterPro" id="IPR017825">
    <property type="entry name" value="Lycopene_cyclase_dom"/>
</dbReference>
<dbReference type="InterPro" id="IPR050475">
    <property type="entry name" value="Prenyltransferase_related"/>
</dbReference>
<dbReference type="InterPro" id="IPR000537">
    <property type="entry name" value="UbiA_prenyltransferase"/>
</dbReference>
<dbReference type="InterPro" id="IPR044878">
    <property type="entry name" value="UbiA_sf"/>
</dbReference>
<dbReference type="NCBIfam" id="TIGR03462">
    <property type="entry name" value="CarR_dom_SF"/>
    <property type="match status" value="1"/>
</dbReference>
<dbReference type="NCBIfam" id="NF009608">
    <property type="entry name" value="PRK13105.1"/>
    <property type="match status" value="1"/>
</dbReference>
<dbReference type="PANTHER" id="PTHR42723">
    <property type="entry name" value="CHLOROPHYLL SYNTHASE"/>
    <property type="match status" value="1"/>
</dbReference>
<dbReference type="PANTHER" id="PTHR42723:SF1">
    <property type="entry name" value="CHLOROPHYLL SYNTHASE, CHLOROPLASTIC"/>
    <property type="match status" value="1"/>
</dbReference>
<dbReference type="Pfam" id="PF18916">
    <property type="entry name" value="Lycopene_cyc"/>
    <property type="match status" value="1"/>
</dbReference>
<dbReference type="Pfam" id="PF01040">
    <property type="entry name" value="UbiA"/>
    <property type="match status" value="1"/>
</dbReference>
<keyword id="KW-0125">Carotenoid biosynthesis</keyword>
<keyword id="KW-1003">Cell membrane</keyword>
<keyword id="KW-0413">Isomerase</keyword>
<keyword id="KW-0472">Membrane</keyword>
<keyword id="KW-0808">Transferase</keyword>
<keyword id="KW-0812">Transmembrane</keyword>
<keyword id="KW-1133">Transmembrane helix</keyword>
<evidence type="ECO:0000250" key="1">
    <source>
        <dbReference type="UniProtKB" id="M0L7V9"/>
    </source>
</evidence>
<evidence type="ECO:0000255" key="2"/>
<evidence type="ECO:0000256" key="3">
    <source>
        <dbReference type="SAM" id="MobiDB-lite"/>
    </source>
</evidence>
<evidence type="ECO:0000269" key="4">
    <source>
    </source>
</evidence>
<evidence type="ECO:0000303" key="5">
    <source>
    </source>
</evidence>
<evidence type="ECO:0000305" key="6"/>
<evidence type="ECO:0000305" key="7">
    <source>
    </source>
</evidence>
<proteinExistence type="evidence at protein level"/>
<name>LBTBC_DIESC</name>
<accession>A1XI30</accession>
<reference key="1">
    <citation type="journal article" date="2007" name="Gene">
        <title>Genes from a Dietzia sp. for synthesis of C40 and C50 beta-cyclic carotenoids.</title>
        <authorList>
            <person name="Tao L."/>
            <person name="Yao H."/>
            <person name="Cheng Q."/>
        </authorList>
    </citation>
    <scope>NUCLEOTIDE SEQUENCE [GENOMIC DNA]</scope>
    <scope>FUNCTION</scope>
    <scope>PATHWAY</scope>
    <scope>SUBUNIT</scope>
    <source>
        <strain>CQ4</strain>
    </source>
</reference>
<comment type="function">
    <text evidence="1 4 7">Involved in the biosynthesis of C(50) beta-cyclic carotenoids (PubMed:17008032). The elongase/hydratase domain catalyzes the elongation of lycopene by attaching a C(5) isoprene unit at C-2, as well as the hydroxylation of the previous end of the molecule (By similarity). The enzyme acts at both ends of the substrate, and catalyzes the conversion of lycopene to the C(45) intermediate dihydroisopentenyldehydrorhodopin (DH-IDR) and the conversion of isopentenyldehydrorhodopin (IDR) to the C(50) carotenoid dihydrobisanhydrobacterioruberin (DH-BABR) (By similarity). The beta-cyclase domain may produce the C(50) beta-cyclic carotenoid C.p.450 from the C(50) carotenoid dihydrobisanhydrobacterioruberin (DH-BABR) (Probable).</text>
</comment>
<comment type="catalytic activity">
    <reaction evidence="1">
        <text>all-trans-lycopene + dimethylallyl diphosphate + H2O = dihydroisopentenyldehydrorhodopin + diphosphate</text>
        <dbReference type="Rhea" id="RHEA:58188"/>
        <dbReference type="ChEBI" id="CHEBI:15377"/>
        <dbReference type="ChEBI" id="CHEBI:15948"/>
        <dbReference type="ChEBI" id="CHEBI:33019"/>
        <dbReference type="ChEBI" id="CHEBI:57623"/>
        <dbReference type="ChEBI" id="CHEBI:87163"/>
        <dbReference type="EC" id="2.5.1.150"/>
    </reaction>
</comment>
<comment type="catalytic activity">
    <reaction evidence="1">
        <text>isopentenyldehydrorhodopin + dimethylallyl diphosphate + H2O = dihydrobisanhydrobacterioruberin + diphosphate</text>
        <dbReference type="Rhea" id="RHEA:58192"/>
        <dbReference type="ChEBI" id="CHEBI:15377"/>
        <dbReference type="ChEBI" id="CHEBI:33019"/>
        <dbReference type="ChEBI" id="CHEBI:57623"/>
        <dbReference type="ChEBI" id="CHEBI:87161"/>
        <dbReference type="ChEBI" id="CHEBI:87162"/>
        <dbReference type="EC" id="2.5.1.150"/>
    </reaction>
</comment>
<comment type="pathway">
    <text evidence="4">Carotenoid biosynthesis.</text>
</comment>
<comment type="subunit">
    <text evidence="7">May form a complex with LbtA.</text>
</comment>
<comment type="subcellular location">
    <subcellularLocation>
        <location evidence="6">Cell membrane</location>
        <topology evidence="2">Multi-pass membrane protein</topology>
    </subcellularLocation>
</comment>
<comment type="similarity">
    <text evidence="6">Belongs to the UbiA prenyltransferase family.</text>
</comment>
<sequence length="432" mass="45929">MTSLYTTLNLTMSIPVVAVALLAAWRLRGPERRRWLIGVGGALLILMILTAVFDNIMISAGLVAYDDSLTSGIRLGVAPIEDFAYAVAAAVFVPSVWALLTASPRVGAEVGSPTVSGRGDALLTRAPEPGDDDEVRTPERPGTPGLLTTLFWSSRPVSWVNTAAPFALAYFLATGGFDLVGVIGTIFFLVPYNLAMYGINDVFDYESDLRNPRKGGVEGSVLERSRHTATLVASAVTTVPFLVYLVLTGTVESSLWLAASAFAVIAYSAKGLRFKEIPFLDSLTSAFHFVSPAIVGWTIAGAELTGGVWACLIAFMLWGAASQAFGAVQDVRFDREADLKSVATVLGARAAVWFALACYVAAVVVLLAAAPWPASGAAFAILPYLATVAAYVGVTDADAERTNEGWKRFLVLNMLAGFCVTQIVLWSVLVWS</sequence>
<protein>
    <recommendedName>
        <fullName evidence="6">C(50) beta-cyclic carotenoids biosynthesis protein LbtBC</fullName>
    </recommendedName>
    <domain>
        <recommendedName>
            <fullName evidence="6">Putative C(50) carotenoid beta-cyclase subunit B</fullName>
            <ecNumber evidence="7">5.5.1.-</ecNumber>
        </recommendedName>
    </domain>
    <domain>
        <recommendedName>
            <fullName evidence="1">Lycopene elongase/hydratase</fullName>
            <ecNumber evidence="1">2.5.1.150</ecNumber>
        </recommendedName>
    </domain>
</protein>